<comment type="function">
    <text evidence="2 9">Plays an important role in the maintenance of the Golgi complex, in membrane trafficking, in exocytosis, through its interaction with myosin VI and Rab8. Links myosin VI to the Golgi complex and plays an important role in Golgi ribbon formation. Plays a role in the activation of innate immune response during viral infection. Mechanistically, recruits TBK1 at the Golgi apparatus, promoting its trans-phosphorylation after RLR or TLR3 stimulation. In turn, activated TBK1 phosphorylates its downstream partner IRF3 to produce IFN-beta. Plays a neuroprotective role in the eye and optic nerve. May act by regulating membrane trafficking and cellular morphogenesis via a complex that contains Rab8 and huntingtin (HD). Mediates the interaction of Rab8 with the probable GTPase-activating protein TBC1D17 during Rab8-mediated endocytic trafficking, such as that of transferrin receptor (TFRC/TfR); regulates Rab8 recruitment to tubules emanating from the endocytic recycling compartment. Autophagy receptor that interacts directly with both the cargo to become degraded and an autophagy modifier of the MAP1 LC3 family; targets ubiquitin-coated bacteria (xenophagy), such as cytoplasmic Salmonella enterica, and appears to function in the same pathway as SQSTM1 and CALCOCO2/NDP52.</text>
</comment>
<comment type="subunit">
    <text evidence="2 7">Self-associates (By similarity). Interacts with HD, GTF3A, TRAF3, TBK1 and MYO6. Interacts (via UBAN) with ubiquitinated TFRC (By similarity). Interacts with active GTP-bound Rab8 (RAB8A and/or RAB8B) (PubMed:20388642). Interacts with TBC1D17 (By similarity). Binds to linear ubiquitin chains. Interacts with LC3 family members MAP1LC3A, MAP1LC3B, GABARAP, GABARAPL1 and GABARAPL2; OPTN phosphorylation increases the association (at least with MAP1LC3B) (By similarity). Interacts with RAB12; the interaction may be indirect. Interacts with TBK1; this interaction leads to the Golgi localization of TBK1 and its subsequent activation (By similarity). Interacts with palmitoyltransferase ZDHHC17/HIP14; the interaction does not lead to palmitoylation of OPTN (By similarity). Interacts with CYLD (By similarity). Interacts with TOM1; the interaction is indirect and is mediated by MYO6, which acts as a bridge between TOM1 and OPTN (By similarity). Interacts with USP12; the interaction is independent of USP12 deubiquitinase activity and may be involved in regulation of autophagic flux (By similarity).</text>
</comment>
<comment type="subcellular location">
    <subcellularLocation>
        <location evidence="6">Cytoplasm</location>
        <location evidence="6">Perinuclear region</location>
    </subcellularLocation>
    <subcellularLocation>
        <location evidence="2">Golgi apparatus</location>
    </subcellularLocation>
    <subcellularLocation>
        <location evidence="1">Golgi apparatus</location>
        <location evidence="1">trans-Golgi network</location>
    </subcellularLocation>
    <subcellularLocation>
        <location evidence="1">Cytoplasmic vesicle</location>
        <location evidence="1">Autophagosome</location>
    </subcellularLocation>
    <subcellularLocation>
        <location evidence="1">Cytoplasmic vesicle</location>
    </subcellularLocation>
    <subcellularLocation>
        <location evidence="1">Recycling endosome</location>
    </subcellularLocation>
    <text evidence="1 2">Found in the perinuclear region and associates with the Golgi apparatus. Colocalizes with MYO6 and RAB8 at the Golgi complex and in vesicular structures close to the plasma membrane. Localizes to LC3-positive cytoplasmic vesicles upon induction of autophagy (By similarity).</text>
</comment>
<comment type="tissue specificity">
    <text evidence="6">In eye, it is expressed in anterior segment, retina, and optic nerve blood vessels (at protein level). Highly expressed in adult liver, heart and testis.</text>
</comment>
<comment type="developmental stage">
    <text evidence="6">Expressed from 7-day-old embryos.</text>
</comment>
<comment type="domain">
    <text evidence="1">Ubiquitin-binding motif (UBAN) is essential for its inhibitory function, subcellular localization and interaction with TBK1.</text>
</comment>
<comment type="domain">
    <text evidence="1">The LIR (LC3-interacting region) motif mediates the interaction with ATG8 family proteins.</text>
</comment>
<comment type="PTM">
    <text evidence="1">Phosphorylated by TBK1, leading to restrict bacterial proliferation in case of infection.</text>
</comment>
<comment type="miscellaneous">
    <text>OPTN E59K transgenic mice exhibit profound gliosis in the retina.</text>
</comment>
<comment type="miscellaneous">
    <text evidence="9">OPTN-deficient cells display reduced TBK1 activation, IRF3 phosphorylation, and expression of type I IFNs in response to TLR3 and TLR4 stimulation, indicating a role for OPTN in the innate immune response.</text>
</comment>
<dbReference type="EMBL" id="AY071834">
    <property type="protein sequence ID" value="AAL61853.1"/>
    <property type="molecule type" value="mRNA"/>
</dbReference>
<dbReference type="EMBL" id="AY340635">
    <property type="protein sequence ID" value="AAQ21118.1"/>
    <property type="molecule type" value="Genomic_DNA"/>
</dbReference>
<dbReference type="EMBL" id="AY340623">
    <property type="protein sequence ID" value="AAQ21118.1"/>
    <property type="status" value="JOINED"/>
    <property type="molecule type" value="Genomic_DNA"/>
</dbReference>
<dbReference type="EMBL" id="AY340624">
    <property type="protein sequence ID" value="AAQ21118.1"/>
    <property type="status" value="JOINED"/>
    <property type="molecule type" value="Genomic_DNA"/>
</dbReference>
<dbReference type="EMBL" id="AY340625">
    <property type="protein sequence ID" value="AAQ21118.1"/>
    <property type="status" value="JOINED"/>
    <property type="molecule type" value="Genomic_DNA"/>
</dbReference>
<dbReference type="EMBL" id="AY340626">
    <property type="protein sequence ID" value="AAQ21118.1"/>
    <property type="status" value="JOINED"/>
    <property type="molecule type" value="Genomic_DNA"/>
</dbReference>
<dbReference type="EMBL" id="AY340627">
    <property type="protein sequence ID" value="AAQ21118.1"/>
    <property type="status" value="JOINED"/>
    <property type="molecule type" value="Genomic_DNA"/>
</dbReference>
<dbReference type="EMBL" id="AY340628">
    <property type="protein sequence ID" value="AAQ21118.1"/>
    <property type="status" value="JOINED"/>
    <property type="molecule type" value="Genomic_DNA"/>
</dbReference>
<dbReference type="EMBL" id="AY340629">
    <property type="protein sequence ID" value="AAQ21118.1"/>
    <property type="status" value="JOINED"/>
    <property type="molecule type" value="Genomic_DNA"/>
</dbReference>
<dbReference type="EMBL" id="AY340630">
    <property type="protein sequence ID" value="AAQ21118.1"/>
    <property type="status" value="JOINED"/>
    <property type="molecule type" value="Genomic_DNA"/>
</dbReference>
<dbReference type="EMBL" id="AY340631">
    <property type="protein sequence ID" value="AAQ21118.1"/>
    <property type="status" value="JOINED"/>
    <property type="molecule type" value="Genomic_DNA"/>
</dbReference>
<dbReference type="EMBL" id="AY340632">
    <property type="protein sequence ID" value="AAQ21118.1"/>
    <property type="status" value="JOINED"/>
    <property type="molecule type" value="Genomic_DNA"/>
</dbReference>
<dbReference type="EMBL" id="AY340633">
    <property type="protein sequence ID" value="AAQ21118.1"/>
    <property type="status" value="JOINED"/>
    <property type="molecule type" value="Genomic_DNA"/>
</dbReference>
<dbReference type="EMBL" id="AY340634">
    <property type="protein sequence ID" value="AAQ21118.1"/>
    <property type="status" value="JOINED"/>
    <property type="molecule type" value="Genomic_DNA"/>
</dbReference>
<dbReference type="EMBL" id="AL928662">
    <property type="status" value="NOT_ANNOTATED_CDS"/>
    <property type="molecule type" value="Genomic_DNA"/>
</dbReference>
<dbReference type="EMBL" id="BC061185">
    <property type="protein sequence ID" value="AAH61185.1"/>
    <property type="molecule type" value="mRNA"/>
</dbReference>
<dbReference type="CCDS" id="CCDS15663.1"/>
<dbReference type="RefSeq" id="NP_001343416.1">
    <property type="nucleotide sequence ID" value="NM_001356487.1"/>
</dbReference>
<dbReference type="RefSeq" id="NP_862896.1">
    <property type="nucleotide sequence ID" value="NM_181848.5"/>
</dbReference>
<dbReference type="RefSeq" id="XP_006497609.1">
    <property type="nucleotide sequence ID" value="XM_006497546.1"/>
</dbReference>
<dbReference type="RefSeq" id="XP_006497610.1">
    <property type="nucleotide sequence ID" value="XM_006497547.5"/>
</dbReference>
<dbReference type="RefSeq" id="XP_011237289.1">
    <property type="nucleotide sequence ID" value="XM_011238987.4"/>
</dbReference>
<dbReference type="PDB" id="5WQ4">
    <property type="method" value="X-ray"/>
    <property type="resolution" value="3.00 A"/>
    <property type="chains" value="C/D/E/F=417-513"/>
</dbReference>
<dbReference type="PDBsum" id="5WQ4"/>
<dbReference type="SMR" id="Q8K3K8"/>
<dbReference type="BioGRID" id="214832">
    <property type="interactions" value="11"/>
</dbReference>
<dbReference type="CORUM" id="Q8K3K8"/>
<dbReference type="FunCoup" id="Q8K3K8">
    <property type="interactions" value="1346"/>
</dbReference>
<dbReference type="IntAct" id="Q8K3K8">
    <property type="interactions" value="3"/>
</dbReference>
<dbReference type="MINT" id="Q8K3K8"/>
<dbReference type="STRING" id="10090.ENSMUSP00000110648"/>
<dbReference type="GlyGen" id="Q8K3K8">
    <property type="glycosylation" value="1 site"/>
</dbReference>
<dbReference type="iPTMnet" id="Q8K3K8"/>
<dbReference type="PhosphoSitePlus" id="Q8K3K8"/>
<dbReference type="SwissPalm" id="Q8K3K8"/>
<dbReference type="jPOST" id="Q8K3K8"/>
<dbReference type="PaxDb" id="10090-ENSMUSP00000027986"/>
<dbReference type="PeptideAtlas" id="Q8K3K8"/>
<dbReference type="ProteomicsDB" id="293520"/>
<dbReference type="Pumba" id="Q8K3K8"/>
<dbReference type="Antibodypedia" id="1010">
    <property type="antibodies" value="391 antibodies from 38 providers"/>
</dbReference>
<dbReference type="DNASU" id="71648"/>
<dbReference type="Ensembl" id="ENSMUST00000027986.5">
    <property type="protein sequence ID" value="ENSMUSP00000027986.5"/>
    <property type="gene ID" value="ENSMUSG00000026672.12"/>
</dbReference>
<dbReference type="Ensembl" id="ENSMUST00000114996.8">
    <property type="protein sequence ID" value="ENSMUSP00000110648.2"/>
    <property type="gene ID" value="ENSMUSG00000026672.12"/>
</dbReference>
<dbReference type="GeneID" id="71648"/>
<dbReference type="KEGG" id="mmu:71648"/>
<dbReference type="UCSC" id="uc008ifm.1">
    <property type="organism name" value="mouse"/>
</dbReference>
<dbReference type="AGR" id="MGI:1918898"/>
<dbReference type="CTD" id="10133"/>
<dbReference type="MGI" id="MGI:1918898">
    <property type="gene designation" value="Optn"/>
</dbReference>
<dbReference type="VEuPathDB" id="HostDB:ENSMUSG00000026672"/>
<dbReference type="eggNOG" id="ENOG502QTG2">
    <property type="taxonomic scope" value="Eukaryota"/>
</dbReference>
<dbReference type="GeneTree" id="ENSGT00530000063808"/>
<dbReference type="HOGENOM" id="CLU_034097_1_0_1"/>
<dbReference type="InParanoid" id="Q8K3K8"/>
<dbReference type="OMA" id="KCGMILP"/>
<dbReference type="OrthoDB" id="6343844at2759"/>
<dbReference type="PhylomeDB" id="Q8K3K8"/>
<dbReference type="TreeFam" id="TF326608"/>
<dbReference type="Reactome" id="R-MMU-2565942">
    <property type="pathway name" value="Regulation of PLK1 Activity at G2/M Transition"/>
</dbReference>
<dbReference type="Reactome" id="R-MMU-5205685">
    <property type="pathway name" value="PINK1-PRKN Mediated Mitophagy"/>
</dbReference>
<dbReference type="Reactome" id="R-MMU-5357905">
    <property type="pathway name" value="Regulation of TNFR1 signaling"/>
</dbReference>
<dbReference type="Reactome" id="R-MMU-5357956">
    <property type="pathway name" value="TNFR1-induced NF-kappa-B signaling pathway"/>
</dbReference>
<dbReference type="Reactome" id="R-MMU-8854214">
    <property type="pathway name" value="TBC/RABGAPs"/>
</dbReference>
<dbReference type="Reactome" id="R-MMU-936964">
    <property type="pathway name" value="Activation of IRF3, IRF7 mediated by TBK1, IKKEpsilon (IKBKE)"/>
</dbReference>
<dbReference type="Reactome" id="R-MMU-9824878">
    <property type="pathway name" value="Regulation of TBK1, IKKEpsilon (IKBKE)-mediated activation of IRF3, IRF7"/>
</dbReference>
<dbReference type="BioGRID-ORCS" id="71648">
    <property type="hits" value="8 hits in 78 CRISPR screens"/>
</dbReference>
<dbReference type="ChiTaRS" id="Optn">
    <property type="organism name" value="mouse"/>
</dbReference>
<dbReference type="PRO" id="PR:Q8K3K8"/>
<dbReference type="Proteomes" id="UP000000589">
    <property type="component" value="Chromosome 2"/>
</dbReference>
<dbReference type="RNAct" id="Q8K3K8">
    <property type="molecule type" value="protein"/>
</dbReference>
<dbReference type="Bgee" id="ENSMUSG00000026672">
    <property type="expression patterns" value="Expressed in retinal neural layer and 200 other cell types or tissues"/>
</dbReference>
<dbReference type="GO" id="GO:0005776">
    <property type="term" value="C:autophagosome"/>
    <property type="evidence" value="ECO:0007669"/>
    <property type="project" value="UniProtKB-SubCell"/>
</dbReference>
<dbReference type="GO" id="GO:0005829">
    <property type="term" value="C:cytosol"/>
    <property type="evidence" value="ECO:0007669"/>
    <property type="project" value="Ensembl"/>
</dbReference>
<dbReference type="GO" id="GO:0005794">
    <property type="term" value="C:Golgi apparatus"/>
    <property type="evidence" value="ECO:0000250"/>
    <property type="project" value="UniProtKB"/>
</dbReference>
<dbReference type="GO" id="GO:0048471">
    <property type="term" value="C:perinuclear region of cytoplasm"/>
    <property type="evidence" value="ECO:0000314"/>
    <property type="project" value="MGI"/>
</dbReference>
<dbReference type="GO" id="GO:0055037">
    <property type="term" value="C:recycling endosome"/>
    <property type="evidence" value="ECO:0007669"/>
    <property type="project" value="UniProtKB-SubCell"/>
</dbReference>
<dbReference type="GO" id="GO:0005802">
    <property type="term" value="C:trans-Golgi network"/>
    <property type="evidence" value="ECO:0000250"/>
    <property type="project" value="UniProtKB"/>
</dbReference>
<dbReference type="GO" id="GO:0042802">
    <property type="term" value="F:identical protein binding"/>
    <property type="evidence" value="ECO:0007669"/>
    <property type="project" value="Ensembl"/>
</dbReference>
<dbReference type="GO" id="GO:0070530">
    <property type="term" value="F:K63-linked polyubiquitin modification-dependent protein binding"/>
    <property type="evidence" value="ECO:0000314"/>
    <property type="project" value="MGI"/>
</dbReference>
<dbReference type="GO" id="GO:0030674">
    <property type="term" value="F:protein-macromolecule adaptor activity"/>
    <property type="evidence" value="ECO:0007669"/>
    <property type="project" value="Ensembl"/>
</dbReference>
<dbReference type="GO" id="GO:0008270">
    <property type="term" value="F:zinc ion binding"/>
    <property type="evidence" value="ECO:0007669"/>
    <property type="project" value="UniProtKB-KW"/>
</dbReference>
<dbReference type="GO" id="GO:0034620">
    <property type="term" value="P:cellular response to unfolded protein"/>
    <property type="evidence" value="ECO:0000250"/>
    <property type="project" value="UniProtKB"/>
</dbReference>
<dbReference type="GO" id="GO:0050829">
    <property type="term" value="P:defense response to Gram-negative bacterium"/>
    <property type="evidence" value="ECO:0007669"/>
    <property type="project" value="Ensembl"/>
</dbReference>
<dbReference type="GO" id="GO:0090161">
    <property type="term" value="P:Golgi ribbon formation"/>
    <property type="evidence" value="ECO:0000250"/>
    <property type="project" value="UniProtKB"/>
</dbReference>
<dbReference type="GO" id="GO:0043001">
    <property type="term" value="P:Golgi to plasma membrane protein transport"/>
    <property type="evidence" value="ECO:0007669"/>
    <property type="project" value="Ensembl"/>
</dbReference>
<dbReference type="GO" id="GO:0045087">
    <property type="term" value="P:innate immune response"/>
    <property type="evidence" value="ECO:0007669"/>
    <property type="project" value="UniProtKB-KW"/>
</dbReference>
<dbReference type="GO" id="GO:0043124">
    <property type="term" value="P:negative regulation of canonical NF-kappaB signal transduction"/>
    <property type="evidence" value="ECO:0000315"/>
    <property type="project" value="MGI"/>
</dbReference>
<dbReference type="GO" id="GO:0001920">
    <property type="term" value="P:negative regulation of receptor recycling"/>
    <property type="evidence" value="ECO:0007669"/>
    <property type="project" value="Ensembl"/>
</dbReference>
<dbReference type="GO" id="GO:1904417">
    <property type="term" value="P:positive regulation of xenophagy"/>
    <property type="evidence" value="ECO:0007669"/>
    <property type="project" value="Ensembl"/>
</dbReference>
<dbReference type="GO" id="GO:0008104">
    <property type="term" value="P:protein localization"/>
    <property type="evidence" value="ECO:0000315"/>
    <property type="project" value="MGI"/>
</dbReference>
<dbReference type="GO" id="GO:0034067">
    <property type="term" value="P:protein localization to Golgi apparatus"/>
    <property type="evidence" value="ECO:0007669"/>
    <property type="project" value="Ensembl"/>
</dbReference>
<dbReference type="GO" id="GO:0061734">
    <property type="term" value="P:type 2 mitophagy"/>
    <property type="evidence" value="ECO:0007669"/>
    <property type="project" value="Ensembl"/>
</dbReference>
<dbReference type="CDD" id="cd09803">
    <property type="entry name" value="UBAN"/>
    <property type="match status" value="1"/>
</dbReference>
<dbReference type="FunFam" id="1.20.5.390:FF:000004">
    <property type="entry name" value="Optineurin"/>
    <property type="match status" value="1"/>
</dbReference>
<dbReference type="FunFam" id="1.20.5.390:FF:000007">
    <property type="entry name" value="Optineurin"/>
    <property type="match status" value="1"/>
</dbReference>
<dbReference type="FunFam" id="1.20.5.990:FF:000002">
    <property type="entry name" value="Optineurin"/>
    <property type="match status" value="1"/>
</dbReference>
<dbReference type="Gene3D" id="1.20.5.390">
    <property type="entry name" value="L1 transposable element, trimerization domain"/>
    <property type="match status" value="2"/>
</dbReference>
<dbReference type="Gene3D" id="1.20.5.990">
    <property type="entry name" value="Nemo cc2-lz domain - 1d5 darpin complex"/>
    <property type="match status" value="1"/>
</dbReference>
<dbReference type="InterPro" id="IPR032419">
    <property type="entry name" value="CC2-LZ_dom"/>
</dbReference>
<dbReference type="InterPro" id="IPR021063">
    <property type="entry name" value="NEMO_N"/>
</dbReference>
<dbReference type="InterPro" id="IPR034735">
    <property type="entry name" value="NEMO_ZF"/>
</dbReference>
<dbReference type="InterPro" id="IPR051301">
    <property type="entry name" value="Optineurin/NFkB_EssMod"/>
</dbReference>
<dbReference type="PANTHER" id="PTHR31553">
    <property type="entry name" value="NF-KAPPA-B ESSENTIAL MODULATOR"/>
    <property type="match status" value="1"/>
</dbReference>
<dbReference type="PANTHER" id="PTHR31553:SF2">
    <property type="entry name" value="OPTINEURIN"/>
    <property type="match status" value="1"/>
</dbReference>
<dbReference type="Pfam" id="PF16516">
    <property type="entry name" value="CC2-LZ"/>
    <property type="match status" value="1"/>
</dbReference>
<dbReference type="Pfam" id="PF11577">
    <property type="entry name" value="NEMO"/>
    <property type="match status" value="1"/>
</dbReference>
<dbReference type="Pfam" id="PF18414">
    <property type="entry name" value="zf_C2H2_10"/>
    <property type="match status" value="1"/>
</dbReference>
<dbReference type="PROSITE" id="PS51801">
    <property type="entry name" value="ZF_CCHC_NOA"/>
    <property type="match status" value="1"/>
</dbReference>
<reference key="1">
    <citation type="journal article" date="2005" name="Genomics">
        <title>Molecular cloning, genomic structure, and protein characterization of mouse optineurin.</title>
        <authorList>
            <person name="Rezaie T."/>
            <person name="Sarfarazi M."/>
        </authorList>
    </citation>
    <scope>NUCLEOTIDE SEQUENCE [GENOMIC DNA / MRNA]</scope>
    <scope>SUBCELLULAR LOCATION</scope>
    <scope>TISSUE SPECIFICITY</scope>
    <scope>DEVELOPMENTAL STAGE</scope>
    <source>
        <strain>129</strain>
    </source>
</reference>
<reference key="2">
    <citation type="journal article" date="2009" name="PLoS Biol.">
        <title>Lineage-specific biology revealed by a finished genome assembly of the mouse.</title>
        <authorList>
            <person name="Church D.M."/>
            <person name="Goodstadt L."/>
            <person name="Hillier L.W."/>
            <person name="Zody M.C."/>
            <person name="Goldstein S."/>
            <person name="She X."/>
            <person name="Bult C.J."/>
            <person name="Agarwala R."/>
            <person name="Cherry J.L."/>
            <person name="DiCuccio M."/>
            <person name="Hlavina W."/>
            <person name="Kapustin Y."/>
            <person name="Meric P."/>
            <person name="Maglott D."/>
            <person name="Birtle Z."/>
            <person name="Marques A.C."/>
            <person name="Graves T."/>
            <person name="Zhou S."/>
            <person name="Teague B."/>
            <person name="Potamousis K."/>
            <person name="Churas C."/>
            <person name="Place M."/>
            <person name="Herschleb J."/>
            <person name="Runnheim R."/>
            <person name="Forrest D."/>
            <person name="Amos-Landgraf J."/>
            <person name="Schwartz D.C."/>
            <person name="Cheng Z."/>
            <person name="Lindblad-Toh K."/>
            <person name="Eichler E.E."/>
            <person name="Ponting C.P."/>
        </authorList>
    </citation>
    <scope>NUCLEOTIDE SEQUENCE [LARGE SCALE GENOMIC DNA]</scope>
    <source>
        <strain>C57BL/6J</strain>
    </source>
</reference>
<reference key="3">
    <citation type="journal article" date="2004" name="Genome Res.">
        <title>The status, quality, and expansion of the NIH full-length cDNA project: the Mammalian Gene Collection (MGC).</title>
        <authorList>
            <consortium name="The MGC Project Team"/>
        </authorList>
    </citation>
    <scope>NUCLEOTIDE SEQUENCE [LARGE SCALE MRNA]</scope>
    <source>
        <tissue>Kidney</tissue>
    </source>
</reference>
<reference key="4">
    <citation type="journal article" date="2007" name="Proc. Natl. Acad. Sci. U.S.A.">
        <title>Large-scale phosphorylation analysis of mouse liver.</title>
        <authorList>
            <person name="Villen J."/>
            <person name="Beausoleil S.A."/>
            <person name="Gerber S.A."/>
            <person name="Gygi S.P."/>
        </authorList>
    </citation>
    <scope>IDENTIFICATION BY MASS SPECTROMETRY [LARGE SCALE ANALYSIS]</scope>
    <source>
        <tissue>Liver</tissue>
    </source>
</reference>
<reference key="5">
    <citation type="journal article" date="2010" name="Cell">
        <title>A tissue-specific atlas of mouse protein phosphorylation and expression.</title>
        <authorList>
            <person name="Huttlin E.L."/>
            <person name="Jedrychowski M.P."/>
            <person name="Elias J.E."/>
            <person name="Goswami T."/>
            <person name="Rad R."/>
            <person name="Beausoleil S.A."/>
            <person name="Villen J."/>
            <person name="Haas W."/>
            <person name="Sowa M.E."/>
            <person name="Gygi S.P."/>
        </authorList>
    </citation>
    <scope>PHOSPHORYLATION [LARGE SCALE ANALYSIS] AT SER-187 AND SER-345</scope>
    <scope>IDENTIFICATION BY MASS SPECTROMETRY [LARGE SCALE ANALYSIS]</scope>
    <source>
        <tissue>Brain</tissue>
        <tissue>Brown adipose tissue</tissue>
        <tissue>Kidney</tissue>
        <tissue>Liver</tissue>
        <tissue>Lung</tissue>
        <tissue>Spleen</tissue>
        <tissue>Testis</tissue>
    </source>
</reference>
<reference key="6">
    <citation type="journal article" date="2010" name="Hum. Mol. Genet.">
        <title>Overexpression of optineurin E50K disrupts Rab8 interaction and leads to a progressive retinal degeneration in mice.</title>
        <authorList>
            <person name="Chi Z.L."/>
            <person name="Akahori M."/>
            <person name="Obazawa M."/>
            <person name="Minami M."/>
            <person name="Noda T."/>
            <person name="Nakaya N."/>
            <person name="Tomarev S."/>
            <person name="Kawase K."/>
            <person name="Yamamoto T."/>
            <person name="Noda S."/>
            <person name="Sasaoka M."/>
            <person name="Shimazaki A."/>
            <person name="Takada Y."/>
            <person name="Iwata T."/>
        </authorList>
    </citation>
    <scope>INTERACTION WITH RAB8</scope>
    <scope>MUTAGENESIS OF GLU-50</scope>
</reference>
<reference key="7">
    <citation type="journal article" date="2013" name="Hum. Mol. Genet.">
        <title>Enhanced optineurin E50K-TBK1 interaction evokes protein insolubility and initiates familial primary open-angle glaucoma.</title>
        <authorList>
            <person name="Minegishi Y."/>
            <person name="Iejima D."/>
            <person name="Kobayashi H."/>
            <person name="Chi Z.L."/>
            <person name="Kawase K."/>
            <person name="Yamamoto T."/>
            <person name="Seki T."/>
            <person name="Yuasa S."/>
            <person name="Fukuda K."/>
            <person name="Iwata T."/>
        </authorList>
    </citation>
    <scope>MUTAGENESIS OF GLU-50</scope>
</reference>
<reference key="8">
    <citation type="journal article" date="2016" name="Eur. J. Immunol.">
        <title>Optineurin deficiency in mice is associated with increased sensitivity to Salmonella but does not affect proinflammatory NF-kappaB signaling.</title>
        <authorList>
            <person name="Slowicka K."/>
            <person name="Vereecke L."/>
            <person name="Mc Guire C."/>
            <person name="Sze M."/>
            <person name="Maelfait J."/>
            <person name="Kolpe A."/>
            <person name="Saelens X."/>
            <person name="Beyaert R."/>
            <person name="van Loo G."/>
        </authorList>
    </citation>
    <scope>FUNCTION</scope>
    <scope>MISCELLANEOUS</scope>
</reference>
<organism evidence="10">
    <name type="scientific">Mus musculus</name>
    <name type="common">Mouse</name>
    <dbReference type="NCBI Taxonomy" id="10090"/>
    <lineage>
        <taxon>Eukaryota</taxon>
        <taxon>Metazoa</taxon>
        <taxon>Chordata</taxon>
        <taxon>Craniata</taxon>
        <taxon>Vertebrata</taxon>
        <taxon>Euteleostomi</taxon>
        <taxon>Mammalia</taxon>
        <taxon>Eutheria</taxon>
        <taxon>Euarchontoglires</taxon>
        <taxon>Glires</taxon>
        <taxon>Rodentia</taxon>
        <taxon>Myomorpha</taxon>
        <taxon>Muroidea</taxon>
        <taxon>Muridae</taxon>
        <taxon>Murinae</taxon>
        <taxon>Mus</taxon>
        <taxon>Mus</taxon>
    </lineage>
</organism>
<name>OPTN_MOUSE</name>
<gene>
    <name type="primary">Optn</name>
</gene>
<evidence type="ECO:0000250" key="1"/>
<evidence type="ECO:0000250" key="2">
    <source>
        <dbReference type="UniProtKB" id="Q96CV9"/>
    </source>
</evidence>
<evidence type="ECO:0000255" key="3"/>
<evidence type="ECO:0000255" key="4">
    <source>
        <dbReference type="PROSITE-ProRule" id="PRU01142"/>
    </source>
</evidence>
<evidence type="ECO:0000256" key="5">
    <source>
        <dbReference type="SAM" id="MobiDB-lite"/>
    </source>
</evidence>
<evidence type="ECO:0000269" key="6">
    <source>
    </source>
</evidence>
<evidence type="ECO:0000269" key="7">
    <source>
    </source>
</evidence>
<evidence type="ECO:0000269" key="8">
    <source>
    </source>
</evidence>
<evidence type="ECO:0000269" key="9">
    <source>
    </source>
</evidence>
<evidence type="ECO:0000312" key="10">
    <source>
        <dbReference type="Proteomes" id="UP000000589"/>
    </source>
</evidence>
<evidence type="ECO:0007744" key="11">
    <source>
    </source>
</evidence>
<evidence type="ECO:0007829" key="12">
    <source>
        <dbReference type="PDB" id="5WQ4"/>
    </source>
</evidence>
<proteinExistence type="evidence at protein level"/>
<accession>Q8K3K8</accession>
<accession>A2ASP3</accession>
<keyword id="KW-0002">3D-structure</keyword>
<keyword id="KW-0072">Autophagy</keyword>
<keyword id="KW-0175">Coiled coil</keyword>
<keyword id="KW-0963">Cytoplasm</keyword>
<keyword id="KW-0968">Cytoplasmic vesicle</keyword>
<keyword id="KW-0967">Endosome</keyword>
<keyword id="KW-0333">Golgi apparatus</keyword>
<keyword id="KW-0391">Immunity</keyword>
<keyword id="KW-0399">Innate immunity</keyword>
<keyword id="KW-0479">Metal-binding</keyword>
<keyword id="KW-0597">Phosphoprotein</keyword>
<keyword id="KW-1185">Reference proteome</keyword>
<keyword id="KW-0862">Zinc</keyword>
<keyword id="KW-0863">Zinc-finger</keyword>
<feature type="chain" id="PRO_0000058069" description="Optineurin">
    <location>
        <begin position="1"/>
        <end position="584"/>
    </location>
</feature>
<feature type="zinc finger region" description="CCHC NOA-type" evidence="4">
    <location>
        <begin position="554"/>
        <end position="584"/>
    </location>
</feature>
<feature type="region of interest" description="Disordered" evidence="5">
    <location>
        <begin position="1"/>
        <end position="32"/>
    </location>
</feature>
<feature type="region of interest" description="Interaction with Rab8" evidence="1">
    <location>
        <begin position="58"/>
        <end position="219"/>
    </location>
</feature>
<feature type="region of interest" description="Disordered" evidence="5">
    <location>
        <begin position="267"/>
        <end position="302"/>
    </location>
</feature>
<feature type="region of interest" description="Interaction with HD" evidence="1">
    <location>
        <begin position="414"/>
        <end position="584"/>
    </location>
</feature>
<feature type="region of interest" description="Interaction with MYO6" evidence="2">
    <location>
        <begin position="415"/>
        <end position="524"/>
    </location>
</feature>
<feature type="coiled-coil region" evidence="3">
    <location>
        <begin position="38"/>
        <end position="180"/>
    </location>
</feature>
<feature type="coiled-coil region" evidence="3">
    <location>
        <begin position="243"/>
        <end position="278"/>
    </location>
</feature>
<feature type="coiled-coil region" evidence="3">
    <location>
        <begin position="307"/>
        <end position="511"/>
    </location>
</feature>
<feature type="short sequence motif" description="LIR">
    <location>
        <begin position="186"/>
        <end position="191"/>
    </location>
</feature>
<feature type="short sequence motif" description="UBAN">
    <location>
        <begin position="477"/>
        <end position="482"/>
    </location>
</feature>
<feature type="compositionally biased region" description="Basic and acidic residues" evidence="5">
    <location>
        <begin position="267"/>
        <end position="295"/>
    </location>
</feature>
<feature type="binding site" evidence="4">
    <location>
        <position position="562"/>
    </location>
    <ligand>
        <name>Zn(2+)</name>
        <dbReference type="ChEBI" id="CHEBI:29105"/>
    </ligand>
</feature>
<feature type="binding site" evidence="4">
    <location>
        <position position="565"/>
    </location>
    <ligand>
        <name>Zn(2+)</name>
        <dbReference type="ChEBI" id="CHEBI:29105"/>
    </ligand>
</feature>
<feature type="binding site" evidence="4">
    <location>
        <position position="578"/>
    </location>
    <ligand>
        <name>Zn(2+)</name>
        <dbReference type="ChEBI" id="CHEBI:29105"/>
    </ligand>
</feature>
<feature type="binding site" evidence="4">
    <location>
        <position position="582"/>
    </location>
    <ligand>
        <name>Zn(2+)</name>
        <dbReference type="ChEBI" id="CHEBI:29105"/>
    </ligand>
</feature>
<feature type="modified residue" description="Phosphoserine" evidence="11">
    <location>
        <position position="187"/>
    </location>
</feature>
<feature type="modified residue" description="Phosphoserine" evidence="11">
    <location>
        <position position="345"/>
    </location>
</feature>
<feature type="modified residue" description="Phosphoserine" evidence="2">
    <location>
        <position position="530"/>
    </location>
</feature>
<feature type="mutagenesis site" description="Disrupts direct interaction with Rab8; accumulation in the retinal outer plexiform layer; loss of retinal ganglion cells and connecting synapses, degeneration of entire retina without elevation of intraocular pressure." evidence="7 8">
    <original>E</original>
    <variation>K</variation>
    <location>
        <position position="50"/>
    </location>
</feature>
<feature type="helix" evidence="12">
    <location>
        <begin position="436"/>
        <end position="505"/>
    </location>
</feature>
<sequence>MSHQPLSCLTEKGDSPCETPGNGPSNMVHPSLDTFTPEELLQQMKELLVENHQLKEAMKLNNQAMKGRFEELSAWTEKQKEERLLFEMQSKEVKERLKALTHENERLKEELGKFKEKSEKPLEDLTGGYRYPRALEEEVEKLKTQVEQEVEHLKIQVMRLRAEKADLLGIVSELQLKLNSGGSSEDSFVEIRMTEGETEGAMKEMKNCPTPTRTDPISLSNCTEDARSCAEFEELTVSQLLLCLREGNQKVERLEVALREAKERISDFEKKANGHSSTEKQTARRADREKEDKGQESVGSEVETLSIQVTSLFKELQEAHTKLSEAELMKKRLQEKCQALERKNSATPSELNEKQELVYSNKKLELQVESMRSEIKMEQAKTEEEKSRLATLQATHNKLLQEHNKALKTIEELTKQQAEKVDKMLLQELSEKLELAEQALASKQLQMDEMKQTLAKQEEDLETMAVLRAQMEVYCSDFHAERAAREKIHEEKEQLALQLAILLKENNDIEEGGSRQSLMEMQCRHGARTSDSDQQTYLFQRGAEDRSWQHGQQPRSIPIHSCPKCGEVLPDIDTLQIHVMDCII</sequence>
<protein>
    <recommendedName>
        <fullName>Optineurin</fullName>
    </recommendedName>
</protein>